<proteinExistence type="inferred from homology"/>
<organism>
    <name type="scientific">Buchnera aphidicola subsp. Schizaphis graminum (strain Sg)</name>
    <dbReference type="NCBI Taxonomy" id="198804"/>
    <lineage>
        <taxon>Bacteria</taxon>
        <taxon>Pseudomonadati</taxon>
        <taxon>Pseudomonadota</taxon>
        <taxon>Gammaproteobacteria</taxon>
        <taxon>Enterobacterales</taxon>
        <taxon>Erwiniaceae</taxon>
        <taxon>Buchnera</taxon>
    </lineage>
</organism>
<evidence type="ECO:0000255" key="1">
    <source>
        <dbReference type="HAMAP-Rule" id="MF_00108"/>
    </source>
</evidence>
<comment type="function">
    <text evidence="1">Catalyzes the formation of 4-diphosphocytidyl-2-C-methyl-D-erythritol from CTP and 2-C-methyl-D-erythritol 4-phosphate (MEP).</text>
</comment>
<comment type="catalytic activity">
    <reaction evidence="1">
        <text>2-C-methyl-D-erythritol 4-phosphate + CTP + H(+) = 4-CDP-2-C-methyl-D-erythritol + diphosphate</text>
        <dbReference type="Rhea" id="RHEA:13429"/>
        <dbReference type="ChEBI" id="CHEBI:15378"/>
        <dbReference type="ChEBI" id="CHEBI:33019"/>
        <dbReference type="ChEBI" id="CHEBI:37563"/>
        <dbReference type="ChEBI" id="CHEBI:57823"/>
        <dbReference type="ChEBI" id="CHEBI:58262"/>
        <dbReference type="EC" id="2.7.7.60"/>
    </reaction>
</comment>
<comment type="pathway">
    <text evidence="1">Isoprenoid biosynthesis; isopentenyl diphosphate biosynthesis via DXP pathway; isopentenyl diphosphate from 1-deoxy-D-xylulose 5-phosphate: step 2/6.</text>
</comment>
<comment type="subunit">
    <text evidence="1">Homodimer.</text>
</comment>
<comment type="similarity">
    <text evidence="1">Belongs to the IspD/TarI cytidylyltransferase family. IspD subfamily.</text>
</comment>
<dbReference type="EC" id="2.7.7.60" evidence="1"/>
<dbReference type="EMBL" id="AE013218">
    <property type="protein sequence ID" value="AAM67955.1"/>
    <property type="molecule type" value="Genomic_DNA"/>
</dbReference>
<dbReference type="RefSeq" id="WP_011053922.1">
    <property type="nucleotide sequence ID" value="NC_004061.1"/>
</dbReference>
<dbReference type="SMR" id="Q8K9D6"/>
<dbReference type="STRING" id="198804.BUsg_405"/>
<dbReference type="GeneID" id="93003878"/>
<dbReference type="KEGG" id="bas:BUsg_405"/>
<dbReference type="eggNOG" id="COG1211">
    <property type="taxonomic scope" value="Bacteria"/>
</dbReference>
<dbReference type="HOGENOM" id="CLU_061281_3_1_6"/>
<dbReference type="UniPathway" id="UPA00056">
    <property type="reaction ID" value="UER00093"/>
</dbReference>
<dbReference type="Proteomes" id="UP000000416">
    <property type="component" value="Chromosome"/>
</dbReference>
<dbReference type="GO" id="GO:0050518">
    <property type="term" value="F:2-C-methyl-D-erythritol 4-phosphate cytidylyltransferase activity"/>
    <property type="evidence" value="ECO:0007669"/>
    <property type="project" value="UniProtKB-UniRule"/>
</dbReference>
<dbReference type="GO" id="GO:0019288">
    <property type="term" value="P:isopentenyl diphosphate biosynthetic process, methylerythritol 4-phosphate pathway"/>
    <property type="evidence" value="ECO:0007669"/>
    <property type="project" value="UniProtKB-UniRule"/>
</dbReference>
<dbReference type="CDD" id="cd02516">
    <property type="entry name" value="CDP-ME_synthetase"/>
    <property type="match status" value="1"/>
</dbReference>
<dbReference type="FunFam" id="3.90.550.10:FF:000003">
    <property type="entry name" value="2-C-methyl-D-erythritol 4-phosphate cytidylyltransferase"/>
    <property type="match status" value="1"/>
</dbReference>
<dbReference type="Gene3D" id="3.90.550.10">
    <property type="entry name" value="Spore Coat Polysaccharide Biosynthesis Protein SpsA, Chain A"/>
    <property type="match status" value="1"/>
</dbReference>
<dbReference type="HAMAP" id="MF_00108">
    <property type="entry name" value="IspD"/>
    <property type="match status" value="1"/>
</dbReference>
<dbReference type="InterPro" id="IPR001228">
    <property type="entry name" value="IspD"/>
</dbReference>
<dbReference type="InterPro" id="IPR034683">
    <property type="entry name" value="IspD/TarI"/>
</dbReference>
<dbReference type="InterPro" id="IPR050088">
    <property type="entry name" value="IspD/TarI_cytidylyltransf_bact"/>
</dbReference>
<dbReference type="InterPro" id="IPR018294">
    <property type="entry name" value="ISPD_synthase_CS"/>
</dbReference>
<dbReference type="InterPro" id="IPR029044">
    <property type="entry name" value="Nucleotide-diphossugar_trans"/>
</dbReference>
<dbReference type="NCBIfam" id="TIGR00453">
    <property type="entry name" value="ispD"/>
    <property type="match status" value="1"/>
</dbReference>
<dbReference type="PANTHER" id="PTHR32125">
    <property type="entry name" value="2-C-METHYL-D-ERYTHRITOL 4-PHOSPHATE CYTIDYLYLTRANSFERASE, CHLOROPLASTIC"/>
    <property type="match status" value="1"/>
</dbReference>
<dbReference type="PANTHER" id="PTHR32125:SF4">
    <property type="entry name" value="2-C-METHYL-D-ERYTHRITOL 4-PHOSPHATE CYTIDYLYLTRANSFERASE, CHLOROPLASTIC"/>
    <property type="match status" value="1"/>
</dbReference>
<dbReference type="Pfam" id="PF01128">
    <property type="entry name" value="IspD"/>
    <property type="match status" value="1"/>
</dbReference>
<dbReference type="SUPFAM" id="SSF53448">
    <property type="entry name" value="Nucleotide-diphospho-sugar transferases"/>
    <property type="match status" value="1"/>
</dbReference>
<dbReference type="PROSITE" id="PS01295">
    <property type="entry name" value="ISPD"/>
    <property type="match status" value="1"/>
</dbReference>
<name>ISPD_BUCAP</name>
<sequence length="236" mass="26967">MKLINSPKLKIIAIVPAAGIGRRMKLDFPKQYIKIKDCTILEYTLKTLLSHPNIVRIVVSLHQEDNFFQKLSISSDLRVFSVLGGNERIHSVLSGLIITTDAKWVIIHDAVRPCLSYQDLENLIAITKNTKVGGILARPVCDTIKYSNRKNKTILHTIPRNQLWHALTPQLFPINLLRFCLKKIVEDKINITDEASALEYCGYHPLIVLGSYKNIKITYPEDLIFAEFYLKELLKN</sequence>
<keyword id="KW-0414">Isoprene biosynthesis</keyword>
<keyword id="KW-0548">Nucleotidyltransferase</keyword>
<keyword id="KW-0808">Transferase</keyword>
<accession>Q8K9D6</accession>
<feature type="chain" id="PRO_0000075558" description="2-C-methyl-D-erythritol 4-phosphate cytidylyltransferase">
    <location>
        <begin position="1"/>
        <end position="236"/>
    </location>
</feature>
<feature type="site" description="Transition state stabilizer" evidence="1">
    <location>
        <position position="23"/>
    </location>
</feature>
<feature type="site" description="Transition state stabilizer" evidence="1">
    <location>
        <position position="30"/>
    </location>
</feature>
<feature type="site" description="Positions MEP for the nucleophilic attack" evidence="1">
    <location>
        <position position="160"/>
    </location>
</feature>
<feature type="site" description="Positions MEP for the nucleophilic attack" evidence="1">
    <location>
        <position position="216"/>
    </location>
</feature>
<protein>
    <recommendedName>
        <fullName evidence="1">2-C-methyl-D-erythritol 4-phosphate cytidylyltransferase</fullName>
        <ecNumber evidence="1">2.7.7.60</ecNumber>
    </recommendedName>
    <alternativeName>
        <fullName evidence="1">4-diphosphocytidyl-2C-methyl-D-erythritol synthase</fullName>
    </alternativeName>
    <alternativeName>
        <fullName evidence="1">MEP cytidylyltransferase</fullName>
        <shortName evidence="1">MCT</shortName>
    </alternativeName>
</protein>
<gene>
    <name evidence="1" type="primary">ispD</name>
    <name type="ordered locus">BUsg_405</name>
</gene>
<reference key="1">
    <citation type="journal article" date="2002" name="Science">
        <title>50 million years of genomic stasis in endosymbiotic bacteria.</title>
        <authorList>
            <person name="Tamas I."/>
            <person name="Klasson L."/>
            <person name="Canbaeck B."/>
            <person name="Naeslund A.K."/>
            <person name="Eriksson A.-S."/>
            <person name="Wernegreen J.J."/>
            <person name="Sandstroem J.P."/>
            <person name="Moran N.A."/>
            <person name="Andersson S.G.E."/>
        </authorList>
    </citation>
    <scope>NUCLEOTIDE SEQUENCE [LARGE SCALE GENOMIC DNA]</scope>
    <source>
        <strain>Sg</strain>
    </source>
</reference>